<keyword id="KW-0131">Cell cycle</keyword>
<keyword id="KW-0132">Cell division</keyword>
<keyword id="KW-1003">Cell membrane</keyword>
<keyword id="KW-0449">Lipoprotein</keyword>
<keyword id="KW-0472">Membrane</keyword>
<keyword id="KW-0564">Palmitate</keyword>
<keyword id="KW-0677">Repeat</keyword>
<keyword id="KW-0732">Signal</keyword>
<keyword id="KW-0802">TPR repeat</keyword>
<sequence length="294" mass="33741">MKPFLRWCYVATALMLAGCSNHDWRKDEVLAIPLQPTLQQEVILARMEQILASRALTDDERAQLLYERGVLYDSLGLRALARNDFSQALAIRPDMPEVFNYLGIYLTQAGNFDAAYEAFDSVLELDPTYNYARLNRGIALYYGGRFPLAQDDLQAFYQDDPNDPFRSLWLYLVEREIDPKAAVVALQQRYEKSDRGQWGWNIVEFYLGKISEKSLMERLKADATDNTSLAEHLSETDFYLGKHYLSLGDKNTASVLFKLTVANNVHNFVEHRYALLELALLGQEQDDLSESDQQ</sequence>
<reference key="1">
    <citation type="journal article" date="2006" name="J. Bacteriol.">
        <title>Complete genome sequence of Yersinia pestis strains Antiqua and Nepal516: evidence of gene reduction in an emerging pathogen.</title>
        <authorList>
            <person name="Chain P.S.G."/>
            <person name="Hu P."/>
            <person name="Malfatti S.A."/>
            <person name="Radnedge L."/>
            <person name="Larimer F."/>
            <person name="Vergez L.M."/>
            <person name="Worsham P."/>
            <person name="Chu M.C."/>
            <person name="Andersen G.L."/>
        </authorList>
    </citation>
    <scope>NUCLEOTIDE SEQUENCE [LARGE SCALE GENOMIC DNA]</scope>
    <source>
        <strain>Nepal516</strain>
    </source>
</reference>
<reference key="2">
    <citation type="submission" date="2009-04" db="EMBL/GenBank/DDBJ databases">
        <title>Yersinia pestis Nepal516A whole genome shotgun sequencing project.</title>
        <authorList>
            <person name="Plunkett G. III"/>
            <person name="Anderson B.D."/>
            <person name="Baumler D.J."/>
            <person name="Burland V."/>
            <person name="Cabot E.L."/>
            <person name="Glasner J.D."/>
            <person name="Mau B."/>
            <person name="Neeno-Eckwall E."/>
            <person name="Perna N.T."/>
            <person name="Munk A.C."/>
            <person name="Tapia R."/>
            <person name="Green L.D."/>
            <person name="Rogers Y.C."/>
            <person name="Detter J.C."/>
            <person name="Bruce D.C."/>
            <person name="Brettin T.S."/>
        </authorList>
    </citation>
    <scope>NUCLEOTIDE SEQUENCE [LARGE SCALE GENOMIC DNA]</scope>
    <source>
        <strain>Nepal516</strain>
    </source>
</reference>
<dbReference type="EMBL" id="CP000305">
    <property type="protein sequence ID" value="ABG16930.1"/>
    <property type="molecule type" value="Genomic_DNA"/>
</dbReference>
<dbReference type="EMBL" id="ACNQ01000006">
    <property type="protein sequence ID" value="EEO78392.1"/>
    <property type="molecule type" value="Genomic_DNA"/>
</dbReference>
<dbReference type="RefSeq" id="WP_002209260.1">
    <property type="nucleotide sequence ID" value="NZ_ACNQ01000006.1"/>
</dbReference>
<dbReference type="SMR" id="Q1CM50"/>
<dbReference type="GeneID" id="57975225"/>
<dbReference type="KEGG" id="ypn:YPN_0598"/>
<dbReference type="HOGENOM" id="CLU_071600_0_0_6"/>
<dbReference type="Proteomes" id="UP000008936">
    <property type="component" value="Chromosome"/>
</dbReference>
<dbReference type="GO" id="GO:0009279">
    <property type="term" value="C:cell outer membrane"/>
    <property type="evidence" value="ECO:0007669"/>
    <property type="project" value="TreeGrafter"/>
</dbReference>
<dbReference type="GO" id="GO:0005886">
    <property type="term" value="C:plasma membrane"/>
    <property type="evidence" value="ECO:0007669"/>
    <property type="project" value="UniProtKB-SubCell"/>
</dbReference>
<dbReference type="GO" id="GO:0051301">
    <property type="term" value="P:cell division"/>
    <property type="evidence" value="ECO:0007669"/>
    <property type="project" value="UniProtKB-KW"/>
</dbReference>
<dbReference type="GO" id="GO:0046813">
    <property type="term" value="P:receptor-mediated virion attachment to host cell"/>
    <property type="evidence" value="ECO:0007669"/>
    <property type="project" value="TreeGrafter"/>
</dbReference>
<dbReference type="Gene3D" id="1.25.40.10">
    <property type="entry name" value="Tetratricopeptide repeat domain"/>
    <property type="match status" value="1"/>
</dbReference>
<dbReference type="InterPro" id="IPR023605">
    <property type="entry name" value="Lipoprotein_NlpI"/>
</dbReference>
<dbReference type="InterPro" id="IPR011990">
    <property type="entry name" value="TPR-like_helical_dom_sf"/>
</dbReference>
<dbReference type="InterPro" id="IPR019734">
    <property type="entry name" value="TPR_rpt"/>
</dbReference>
<dbReference type="InterPro" id="IPR050498">
    <property type="entry name" value="Ycf3"/>
</dbReference>
<dbReference type="NCBIfam" id="NF008391">
    <property type="entry name" value="PRK11189.1"/>
    <property type="match status" value="1"/>
</dbReference>
<dbReference type="PANTHER" id="PTHR44858">
    <property type="entry name" value="TETRATRICOPEPTIDE REPEAT PROTEIN 6"/>
    <property type="match status" value="1"/>
</dbReference>
<dbReference type="PANTHER" id="PTHR44858:SF1">
    <property type="entry name" value="UDP-N-ACETYLGLUCOSAMINE--PEPTIDE N-ACETYLGLUCOSAMINYLTRANSFERASE SPINDLY-RELATED"/>
    <property type="match status" value="1"/>
</dbReference>
<dbReference type="Pfam" id="PF13432">
    <property type="entry name" value="TPR_16"/>
    <property type="match status" value="1"/>
</dbReference>
<dbReference type="Pfam" id="PF13181">
    <property type="entry name" value="TPR_8"/>
    <property type="match status" value="1"/>
</dbReference>
<dbReference type="PIRSF" id="PIRSF004654">
    <property type="entry name" value="NlpI"/>
    <property type="match status" value="1"/>
</dbReference>
<dbReference type="SMART" id="SM00028">
    <property type="entry name" value="TPR"/>
    <property type="match status" value="2"/>
</dbReference>
<dbReference type="SUPFAM" id="SSF48452">
    <property type="entry name" value="TPR-like"/>
    <property type="match status" value="1"/>
</dbReference>
<dbReference type="PROSITE" id="PS51257">
    <property type="entry name" value="PROKAR_LIPOPROTEIN"/>
    <property type="match status" value="1"/>
</dbReference>
<dbReference type="PROSITE" id="PS50005">
    <property type="entry name" value="TPR"/>
    <property type="match status" value="4"/>
</dbReference>
<dbReference type="PROSITE" id="PS50293">
    <property type="entry name" value="TPR_REGION"/>
    <property type="match status" value="1"/>
</dbReference>
<evidence type="ECO:0000250" key="1"/>
<evidence type="ECO:0000255" key="2">
    <source>
        <dbReference type="PROSITE-ProRule" id="PRU00303"/>
    </source>
</evidence>
<name>NLPI_YERPN</name>
<accession>Q1CM50</accession>
<organism>
    <name type="scientific">Yersinia pestis bv. Antiqua (strain Nepal516)</name>
    <dbReference type="NCBI Taxonomy" id="377628"/>
    <lineage>
        <taxon>Bacteria</taxon>
        <taxon>Pseudomonadati</taxon>
        <taxon>Pseudomonadota</taxon>
        <taxon>Gammaproteobacteria</taxon>
        <taxon>Enterobacterales</taxon>
        <taxon>Yersiniaceae</taxon>
        <taxon>Yersinia</taxon>
    </lineage>
</organism>
<protein>
    <recommendedName>
        <fullName>Lipoprotein NlpI</fullName>
    </recommendedName>
</protein>
<feature type="signal peptide" evidence="2">
    <location>
        <begin position="1"/>
        <end position="18"/>
    </location>
</feature>
<feature type="chain" id="PRO_0000413486" description="Lipoprotein NlpI">
    <location>
        <begin position="19"/>
        <end position="294"/>
    </location>
</feature>
<feature type="repeat" description="TPR 1">
    <location>
        <begin position="62"/>
        <end position="95"/>
    </location>
</feature>
<feature type="repeat" description="TPR 2">
    <location>
        <begin position="96"/>
        <end position="129"/>
    </location>
</feature>
<feature type="repeat" description="TPR 3">
    <location>
        <begin position="234"/>
        <end position="267"/>
    </location>
</feature>
<feature type="lipid moiety-binding region" description="N-palmitoyl cysteine" evidence="2">
    <location>
        <position position="19"/>
    </location>
</feature>
<feature type="lipid moiety-binding region" description="S-diacylglycerol cysteine" evidence="2">
    <location>
        <position position="19"/>
    </location>
</feature>
<comment type="function">
    <text evidence="1">May be involved in cell division. May play a role in bacterial septation or regulation of cell wall degradation during cell division (By similarity).</text>
</comment>
<comment type="subunit">
    <text evidence="1">Homodimer.</text>
</comment>
<comment type="subcellular location">
    <subcellularLocation>
        <location evidence="2">Cell membrane</location>
        <topology evidence="2">Lipid-anchor</topology>
    </subcellularLocation>
</comment>
<gene>
    <name type="primary">nlpI</name>
    <name type="ordered locus">YPN_0598</name>
    <name type="ORF">YP516_0629</name>
</gene>
<proteinExistence type="inferred from homology"/>